<keyword id="KW-1185">Reference proteome</keyword>
<keyword id="KW-0687">Ribonucleoprotein</keyword>
<keyword id="KW-0689">Ribosomal protein</keyword>
<organism>
    <name type="scientific">Rickettsia prowazekii (strain Madrid E)</name>
    <dbReference type="NCBI Taxonomy" id="272947"/>
    <lineage>
        <taxon>Bacteria</taxon>
        <taxon>Pseudomonadati</taxon>
        <taxon>Pseudomonadota</taxon>
        <taxon>Alphaproteobacteria</taxon>
        <taxon>Rickettsiales</taxon>
        <taxon>Rickettsiaceae</taxon>
        <taxon>Rickettsieae</taxon>
        <taxon>Rickettsia</taxon>
        <taxon>typhus group</taxon>
    </lineage>
</organism>
<comment type="similarity">
    <text evidence="1">Belongs to the bacterial ribosomal protein bL35 family.</text>
</comment>
<name>RL35_RICPR</name>
<feature type="chain" id="PRO_0000177412" description="Large ribosomal subunit protein bL35">
    <location>
        <begin position="1"/>
        <end position="67"/>
    </location>
</feature>
<gene>
    <name evidence="1" type="primary">rpmI</name>
    <name type="ordered locus">RP608</name>
</gene>
<reference key="1">
    <citation type="journal article" date="1998" name="Nature">
        <title>The genome sequence of Rickettsia prowazekii and the origin of mitochondria.</title>
        <authorList>
            <person name="Andersson S.G.E."/>
            <person name="Zomorodipour A."/>
            <person name="Andersson J.O."/>
            <person name="Sicheritz-Ponten T."/>
            <person name="Alsmark U.C.M."/>
            <person name="Podowski R.M."/>
            <person name="Naeslund A.K."/>
            <person name="Eriksson A.-S."/>
            <person name="Winkler H.H."/>
            <person name="Kurland C.G."/>
        </authorList>
    </citation>
    <scope>NUCLEOTIDE SEQUENCE [LARGE SCALE GENOMIC DNA]</scope>
    <source>
        <strain>Madrid E</strain>
    </source>
</reference>
<dbReference type="EMBL" id="AJ235272">
    <property type="protein sequence ID" value="CAA15052.1"/>
    <property type="molecule type" value="Genomic_DNA"/>
</dbReference>
<dbReference type="PIR" id="B71666">
    <property type="entry name" value="B71666"/>
</dbReference>
<dbReference type="RefSeq" id="NP_220976.1">
    <property type="nucleotide sequence ID" value="NC_000963.1"/>
</dbReference>
<dbReference type="RefSeq" id="WP_004597958.1">
    <property type="nucleotide sequence ID" value="NC_000963.1"/>
</dbReference>
<dbReference type="SMR" id="Q9ZCV1"/>
<dbReference type="STRING" id="272947.gene:17555687"/>
<dbReference type="EnsemblBacteria" id="CAA15052">
    <property type="protein sequence ID" value="CAA15052"/>
    <property type="gene ID" value="CAA15052"/>
</dbReference>
<dbReference type="GeneID" id="57569733"/>
<dbReference type="KEGG" id="rpr:RP608"/>
<dbReference type="PATRIC" id="fig|272947.5.peg.627"/>
<dbReference type="eggNOG" id="COG0291">
    <property type="taxonomic scope" value="Bacteria"/>
</dbReference>
<dbReference type="HOGENOM" id="CLU_169643_2_1_5"/>
<dbReference type="OrthoDB" id="9804851at2"/>
<dbReference type="Proteomes" id="UP000002480">
    <property type="component" value="Chromosome"/>
</dbReference>
<dbReference type="GO" id="GO:0022625">
    <property type="term" value="C:cytosolic large ribosomal subunit"/>
    <property type="evidence" value="ECO:0007669"/>
    <property type="project" value="TreeGrafter"/>
</dbReference>
<dbReference type="GO" id="GO:0003735">
    <property type="term" value="F:structural constituent of ribosome"/>
    <property type="evidence" value="ECO:0007669"/>
    <property type="project" value="InterPro"/>
</dbReference>
<dbReference type="GO" id="GO:0006412">
    <property type="term" value="P:translation"/>
    <property type="evidence" value="ECO:0007669"/>
    <property type="project" value="UniProtKB-UniRule"/>
</dbReference>
<dbReference type="FunFam" id="4.10.410.60:FF:000001">
    <property type="entry name" value="50S ribosomal protein L35"/>
    <property type="match status" value="1"/>
</dbReference>
<dbReference type="Gene3D" id="4.10.410.60">
    <property type="match status" value="1"/>
</dbReference>
<dbReference type="HAMAP" id="MF_00514">
    <property type="entry name" value="Ribosomal_bL35"/>
    <property type="match status" value="1"/>
</dbReference>
<dbReference type="InterPro" id="IPR001706">
    <property type="entry name" value="Ribosomal_bL35"/>
</dbReference>
<dbReference type="InterPro" id="IPR021137">
    <property type="entry name" value="Ribosomal_bL35-like"/>
</dbReference>
<dbReference type="InterPro" id="IPR018265">
    <property type="entry name" value="Ribosomal_bL35_CS"/>
</dbReference>
<dbReference type="InterPro" id="IPR037229">
    <property type="entry name" value="Ribosomal_bL35_sf"/>
</dbReference>
<dbReference type="NCBIfam" id="TIGR00001">
    <property type="entry name" value="rpmI_bact"/>
    <property type="match status" value="1"/>
</dbReference>
<dbReference type="PANTHER" id="PTHR33343">
    <property type="entry name" value="54S RIBOSOMAL PROTEIN BL35M"/>
    <property type="match status" value="1"/>
</dbReference>
<dbReference type="PANTHER" id="PTHR33343:SF1">
    <property type="entry name" value="LARGE RIBOSOMAL SUBUNIT PROTEIN BL35M"/>
    <property type="match status" value="1"/>
</dbReference>
<dbReference type="Pfam" id="PF01632">
    <property type="entry name" value="Ribosomal_L35p"/>
    <property type="match status" value="1"/>
</dbReference>
<dbReference type="PRINTS" id="PR00064">
    <property type="entry name" value="RIBOSOMALL35"/>
</dbReference>
<dbReference type="SUPFAM" id="SSF143034">
    <property type="entry name" value="L35p-like"/>
    <property type="match status" value="1"/>
</dbReference>
<dbReference type="PROSITE" id="PS00936">
    <property type="entry name" value="RIBOSOMAL_L35"/>
    <property type="match status" value="1"/>
</dbReference>
<accession>Q9ZCV1</accession>
<proteinExistence type="inferred from homology"/>
<protein>
    <recommendedName>
        <fullName evidence="1">Large ribosomal subunit protein bL35</fullName>
    </recommendedName>
    <alternativeName>
        <fullName evidence="2">50S ribosomal protein L35</fullName>
    </alternativeName>
</protein>
<evidence type="ECO:0000255" key="1">
    <source>
        <dbReference type="HAMAP-Rule" id="MF_00514"/>
    </source>
</evidence>
<evidence type="ECO:0000305" key="2"/>
<sequence length="67" mass="7705">MPKLKTKSAVKKRFKFTATGKVIASQAGKKHFMRRRTKAQIRNLRGTTILCPQDGHNIKKYFLPYGI</sequence>